<gene>
    <name evidence="1" type="primary">speD</name>
    <name type="ordered locus">DSY4124</name>
</gene>
<comment type="function">
    <text evidence="1">Catalyzes the decarboxylation of S-adenosylmethionine to S-adenosylmethioninamine (dcAdoMet), the propylamine donor required for the synthesis of the polyamines spermine and spermidine from the diamine putrescine.</text>
</comment>
<comment type="catalytic activity">
    <reaction evidence="1">
        <text>S-adenosyl-L-methionine + H(+) = S-adenosyl 3-(methylsulfanyl)propylamine + CO2</text>
        <dbReference type="Rhea" id="RHEA:15981"/>
        <dbReference type="ChEBI" id="CHEBI:15378"/>
        <dbReference type="ChEBI" id="CHEBI:16526"/>
        <dbReference type="ChEBI" id="CHEBI:57443"/>
        <dbReference type="ChEBI" id="CHEBI:59789"/>
        <dbReference type="EC" id="4.1.1.50"/>
    </reaction>
</comment>
<comment type="cofactor">
    <cofactor evidence="1">
        <name>pyruvate</name>
        <dbReference type="ChEBI" id="CHEBI:15361"/>
    </cofactor>
    <text evidence="1">Binds 1 pyruvoyl group covalently per subunit.</text>
</comment>
<comment type="pathway">
    <text evidence="1">Amine and polyamine biosynthesis; S-adenosylmethioninamine biosynthesis; S-adenosylmethioninamine from S-adenosyl-L-methionine: step 1/1.</text>
</comment>
<comment type="subunit">
    <text evidence="1">Heterooctamer of four alpha and four beta chains arranged as a tetramer of alpha/beta heterodimers.</text>
</comment>
<comment type="PTM">
    <text evidence="1">Is synthesized initially as an inactive proenzyme. Formation of the active enzyme involves a self-maturation process in which the active site pyruvoyl group is generated from an internal serine residue via an autocatalytic post-translational modification. Two non-identical subunits are generated from the proenzyme in this reaction, and the pyruvate is formed at the N-terminus of the alpha chain, which is derived from the carboxyl end of the proenzyme. The post-translation cleavage follows an unusual pathway, termed non-hydrolytic serinolysis, in which the side chain hydroxyl group of the serine supplies its oxygen atom to form the C-terminus of the beta chain, while the remainder of the serine residue undergoes an oxidative deamination to produce ammonia and the pyruvoyl group blocking the N-terminus of the alpha chain.</text>
</comment>
<comment type="similarity">
    <text evidence="1">Belongs to the prokaryotic AdoMetDC family. Type 2 subfamily.</text>
</comment>
<name>SPED_DESHY</name>
<reference key="1">
    <citation type="journal article" date="2006" name="J. Bacteriol.">
        <title>Complete genome sequence of the dehalorespiring bacterium Desulfitobacterium hafniense Y51 and comparison with Dehalococcoides ethenogenes 195.</title>
        <authorList>
            <person name="Nonaka H."/>
            <person name="Keresztes G."/>
            <person name="Shinoda Y."/>
            <person name="Ikenaga Y."/>
            <person name="Abe M."/>
            <person name="Naito K."/>
            <person name="Inatomi K."/>
            <person name="Furukawa K."/>
            <person name="Inui M."/>
            <person name="Yukawa H."/>
        </authorList>
    </citation>
    <scope>NUCLEOTIDE SEQUENCE [LARGE SCALE GENOMIC DNA]</scope>
    <source>
        <strain>Y51</strain>
    </source>
</reference>
<sequence length="276" mass="31867">MEVKPLKKLKLYGFNNLTKTLSFNMYDICYAKTPEHRDAYIQYIDEEYNAQRLTSIVTEVARIVGANILNIAKQDYDPQGASVTMLIAEEHLGPENPDDNPFDPVYTDKEGPLPDAVVAHLDKSHITVHTYPESHPHGGISTFRADIDVSTCGQISPLKALNFLIESFAPDIIVADYRVRGFTRDVDGKKVFIDHKINSIQNYVDRKYRDLYQMIDVTVFQEYIFHTKMILKDFDLDNYLFGTAKKELSINDKRKIKQRLKKEMAEIFYGKNMPRM</sequence>
<proteinExistence type="inferred from homology"/>
<evidence type="ECO:0000255" key="1">
    <source>
        <dbReference type="HAMAP-Rule" id="MF_00465"/>
    </source>
</evidence>
<keyword id="KW-0068">Autocatalytic cleavage</keyword>
<keyword id="KW-0210">Decarboxylase</keyword>
<keyword id="KW-0456">Lyase</keyword>
<keyword id="KW-0620">Polyamine biosynthesis</keyword>
<keyword id="KW-0670">Pyruvate</keyword>
<keyword id="KW-1185">Reference proteome</keyword>
<keyword id="KW-0949">S-adenosyl-L-methionine</keyword>
<keyword id="KW-0704">Schiff base</keyword>
<keyword id="KW-0745">Spermidine biosynthesis</keyword>
<keyword id="KW-0865">Zymogen</keyword>
<organism>
    <name type="scientific">Desulfitobacterium hafniense (strain Y51)</name>
    <dbReference type="NCBI Taxonomy" id="138119"/>
    <lineage>
        <taxon>Bacteria</taxon>
        <taxon>Bacillati</taxon>
        <taxon>Bacillota</taxon>
        <taxon>Clostridia</taxon>
        <taxon>Eubacteriales</taxon>
        <taxon>Desulfitobacteriaceae</taxon>
        <taxon>Desulfitobacterium</taxon>
    </lineage>
</organism>
<dbReference type="EC" id="4.1.1.50" evidence="1"/>
<dbReference type="EMBL" id="AP008230">
    <property type="protein sequence ID" value="BAE85913.1"/>
    <property type="molecule type" value="Genomic_DNA"/>
</dbReference>
<dbReference type="RefSeq" id="WP_011461599.1">
    <property type="nucleotide sequence ID" value="NC_007907.1"/>
</dbReference>
<dbReference type="STRING" id="138119.DSY4124"/>
<dbReference type="KEGG" id="dsy:DSY4124"/>
<dbReference type="eggNOG" id="COG1586">
    <property type="taxonomic scope" value="Bacteria"/>
</dbReference>
<dbReference type="HOGENOM" id="CLU_092007_0_0_9"/>
<dbReference type="UniPathway" id="UPA00331">
    <property type="reaction ID" value="UER00451"/>
</dbReference>
<dbReference type="Proteomes" id="UP000001946">
    <property type="component" value="Chromosome"/>
</dbReference>
<dbReference type="GO" id="GO:0005829">
    <property type="term" value="C:cytosol"/>
    <property type="evidence" value="ECO:0007669"/>
    <property type="project" value="TreeGrafter"/>
</dbReference>
<dbReference type="GO" id="GO:0004014">
    <property type="term" value="F:adenosylmethionine decarboxylase activity"/>
    <property type="evidence" value="ECO:0007669"/>
    <property type="project" value="UniProtKB-UniRule"/>
</dbReference>
<dbReference type="GO" id="GO:0008295">
    <property type="term" value="P:spermidine biosynthetic process"/>
    <property type="evidence" value="ECO:0007669"/>
    <property type="project" value="UniProtKB-UniRule"/>
</dbReference>
<dbReference type="Gene3D" id="3.60.90.10">
    <property type="entry name" value="S-adenosylmethionine decarboxylase"/>
    <property type="match status" value="1"/>
</dbReference>
<dbReference type="HAMAP" id="MF_00465">
    <property type="entry name" value="AdoMetDC_2"/>
    <property type="match status" value="1"/>
</dbReference>
<dbReference type="InterPro" id="IPR003826">
    <property type="entry name" value="AdoMetDC_fam_prok"/>
</dbReference>
<dbReference type="InterPro" id="IPR009165">
    <property type="entry name" value="S-AdoMet_deCO2ase_bac"/>
</dbReference>
<dbReference type="InterPro" id="IPR016067">
    <property type="entry name" value="S-AdoMet_deCO2ase_core"/>
</dbReference>
<dbReference type="NCBIfam" id="TIGR03331">
    <property type="entry name" value="SAM_DCase_Eco"/>
    <property type="match status" value="1"/>
</dbReference>
<dbReference type="PANTHER" id="PTHR33866">
    <property type="entry name" value="S-ADENOSYLMETHIONINE DECARBOXYLASE PROENZYME"/>
    <property type="match status" value="1"/>
</dbReference>
<dbReference type="PANTHER" id="PTHR33866:SF1">
    <property type="entry name" value="S-ADENOSYLMETHIONINE DECARBOXYLASE PROENZYME"/>
    <property type="match status" value="1"/>
</dbReference>
<dbReference type="Pfam" id="PF02675">
    <property type="entry name" value="AdoMet_dc"/>
    <property type="match status" value="1"/>
</dbReference>
<dbReference type="PIRSF" id="PIRSF001356">
    <property type="entry name" value="SAM_decarboxylas"/>
    <property type="match status" value="1"/>
</dbReference>
<dbReference type="SUPFAM" id="SSF56276">
    <property type="entry name" value="S-adenosylmethionine decarboxylase"/>
    <property type="match status" value="2"/>
</dbReference>
<protein>
    <recommendedName>
        <fullName evidence="1">S-adenosylmethionine decarboxylase proenzyme</fullName>
        <shortName evidence="1">AdoMetDC</shortName>
        <shortName evidence="1">SAMDC</shortName>
        <ecNumber evidence="1">4.1.1.50</ecNumber>
    </recommendedName>
    <component>
        <recommendedName>
            <fullName evidence="1">S-adenosylmethionine decarboxylase beta chain</fullName>
        </recommendedName>
    </component>
    <component>
        <recommendedName>
            <fullName evidence="1">S-adenosylmethionine decarboxylase alpha chain</fullName>
        </recommendedName>
    </component>
</protein>
<accession>Q24PX9</accession>
<feature type="chain" id="PRO_0000364369" description="S-adenosylmethionine decarboxylase beta chain" evidence="1">
    <location>
        <begin position="1"/>
        <end position="123"/>
    </location>
</feature>
<feature type="chain" id="PRO_0000364370" description="S-adenosylmethionine decarboxylase alpha chain" evidence="1">
    <location>
        <begin position="124"/>
        <end position="276"/>
    </location>
</feature>
<feature type="active site" description="Schiff-base intermediate with substrate; via pyruvic acid" evidence="1">
    <location>
        <position position="124"/>
    </location>
</feature>
<feature type="active site" description="Proton acceptor; for processing activity" evidence="1">
    <location>
        <position position="129"/>
    </location>
</feature>
<feature type="active site" description="Proton donor; for catalytic activity" evidence="1">
    <location>
        <position position="152"/>
    </location>
</feature>
<feature type="site" description="Cleavage (non-hydrolytic); by autolysis" evidence="1">
    <location>
        <begin position="123"/>
        <end position="124"/>
    </location>
</feature>
<feature type="modified residue" description="Pyruvic acid (Ser); by autocatalysis" evidence="1">
    <location>
        <position position="124"/>
    </location>
</feature>